<dbReference type="EC" id="5.4.99.-" evidence="5"/>
<dbReference type="EMBL" id="LC406756">
    <property type="protein sequence ID" value="BBF25318.1"/>
    <property type="molecule type" value="Genomic_DNA"/>
</dbReference>
<dbReference type="UniPathway" id="UPA00213"/>
<dbReference type="GO" id="GO:0016020">
    <property type="term" value="C:membrane"/>
    <property type="evidence" value="ECO:0007669"/>
    <property type="project" value="UniProtKB-SubCell"/>
</dbReference>
<dbReference type="GO" id="GO:0016853">
    <property type="term" value="F:isomerase activity"/>
    <property type="evidence" value="ECO:0007669"/>
    <property type="project" value="UniProtKB-KW"/>
</dbReference>
<dbReference type="GO" id="GO:0016829">
    <property type="term" value="F:lyase activity"/>
    <property type="evidence" value="ECO:0007669"/>
    <property type="project" value="InterPro"/>
</dbReference>
<dbReference type="GO" id="GO:0016114">
    <property type="term" value="P:terpenoid biosynthetic process"/>
    <property type="evidence" value="ECO:0007669"/>
    <property type="project" value="UniProtKB-UniPathway"/>
</dbReference>
<dbReference type="InterPro" id="IPR039020">
    <property type="entry name" value="PaxB-like"/>
</dbReference>
<dbReference type="PANTHER" id="PTHR42038">
    <property type="match status" value="1"/>
</dbReference>
<dbReference type="PANTHER" id="PTHR42038:SF2">
    <property type="entry name" value="TERPENE CYCLASE AUSL"/>
    <property type="match status" value="1"/>
</dbReference>
<dbReference type="Pfam" id="PF25129">
    <property type="entry name" value="Pyr4-TMTC"/>
    <property type="match status" value="1"/>
</dbReference>
<sequence length="273" mass="31078">MAFGVEPPEHVTPWFKPVYEATFQFGGVAWTLCYILIAREGMRTKSYGMPLFALANNFAWEMVYALWVVDNAFEKTAMTIWMLIDTPIIYSILKHGVLEWQHAPMVSRNLKSILVGLIALCAAAHWSWQSWWIGNEMGKRDDLEGADLTQMAYWAVSMCQFLVSTMSLAMLCVRGHSGGVSWMIWLSRFLGTLIGLNMNYAWAYYTWPEAHEYFMSAPAVFVWGVTTVCDIIYGFVLYHVKSNERELSDGRKVAAEADDEQVGGWSKMKTGKN</sequence>
<reference key="1">
    <citation type="journal article" date="2019" name="Proc. Natl. Acad. Sci. U.S.A.">
        <title>Complete biosynthetic pathways of ascofuranone and ascochlorin in Acremonium egyptiacum.</title>
        <authorList>
            <person name="Araki Y."/>
            <person name="Awakawa T."/>
            <person name="Matsuzaki M."/>
            <person name="Cho R."/>
            <person name="Matsuda Y."/>
            <person name="Hoshino S."/>
            <person name="Shinohara Y."/>
            <person name="Yamamoto M."/>
            <person name="Kido Y."/>
            <person name="Inaoka D.K."/>
            <person name="Nagamune K."/>
            <person name="Ito K."/>
            <person name="Abe I."/>
            <person name="Kita K."/>
        </authorList>
    </citation>
    <scope>NUCLEOTIDE SEQUENCE [GENOMIC DNA]</scope>
    <scope>FUNCTION</scope>
    <scope>CATALYTIC ACTIVITY</scope>
    <scope>INDUCTION</scope>
    <scope>DISRUPTION PHENOTYPE</scope>
    <scope>PATHWAY</scope>
    <source>
        <strain>F-1392</strain>
    </source>
</reference>
<reference key="2">
    <citation type="journal article" date="2002" name="Biochim. Biophys. Acta">
        <title>Trypanosome alternative oxidase as a target of chemotherapy.</title>
        <authorList>
            <person name="Nihei C."/>
            <person name="Fukai Y."/>
            <person name="Kita K."/>
        </authorList>
    </citation>
    <scope>BIOTECHNOLOGY</scope>
</reference>
<reference key="3">
    <citation type="journal article" date="2003" name="Parasitol. Int.">
        <title>The efficacy of ascofuranone in a consecutive treatment on Trypanosoma brucei brucei in mice.</title>
        <authorList>
            <person name="Yabu Y."/>
            <person name="Yoshida A."/>
            <person name="Suzuki T."/>
            <person name="Nihei C."/>
            <person name="Kawai K."/>
            <person name="Minagawa N."/>
            <person name="Hosokawa T."/>
            <person name="Nagai K."/>
            <person name="Kita K."/>
            <person name="Ohta N."/>
        </authorList>
    </citation>
    <scope>BIOTECHNOLOGY</scope>
</reference>
<reference key="4">
    <citation type="journal article" date="2010" name="Parasitol. Int.">
        <title>Trypanosome alternative oxidase, a potential therapeutic target for sleeping sickness, is conserved among Trypanosoma brucei subspecies.</title>
        <authorList>
            <person name="Nakamura K."/>
            <person name="Fujioka S."/>
            <person name="Fukumoto S."/>
            <person name="Inoue N."/>
            <person name="Sakamoto K."/>
            <person name="Hirata H."/>
            <person name="Kido Y."/>
            <person name="Yabu Y."/>
            <person name="Suzuki T."/>
            <person name="Watanabe Y."/>
            <person name="Saimoto H."/>
            <person name="Akiyama H."/>
            <person name="Kita K."/>
        </authorList>
    </citation>
    <scope>BIOTECHNOLOGY</scope>
</reference>
<feature type="chain" id="PRO_0000449004" description="Terpene cyclase ascF">
    <location>
        <begin position="1"/>
        <end position="273"/>
    </location>
</feature>
<feature type="transmembrane region" description="Helical" evidence="1">
    <location>
        <begin position="18"/>
        <end position="38"/>
    </location>
</feature>
<feature type="transmembrane region" description="Helical" evidence="1">
    <location>
        <begin position="49"/>
        <end position="69"/>
    </location>
</feature>
<feature type="transmembrane region" description="Helical" evidence="1">
    <location>
        <begin position="78"/>
        <end position="98"/>
    </location>
</feature>
<feature type="transmembrane region" description="Helical" evidence="1">
    <location>
        <begin position="113"/>
        <end position="133"/>
    </location>
</feature>
<feature type="transmembrane region" description="Helical" evidence="1">
    <location>
        <begin position="153"/>
        <end position="173"/>
    </location>
</feature>
<feature type="transmembrane region" description="Helical" evidence="1">
    <location>
        <begin position="178"/>
        <end position="198"/>
    </location>
</feature>
<feature type="transmembrane region" description="Helical" evidence="1">
    <location>
        <begin position="217"/>
        <end position="237"/>
    </location>
</feature>
<evidence type="ECO:0000255" key="1"/>
<evidence type="ECO:0000269" key="2">
    <source>
    </source>
</evidence>
<evidence type="ECO:0000269" key="3">
    <source>
    </source>
</evidence>
<evidence type="ECO:0000269" key="4">
    <source>
    </source>
</evidence>
<evidence type="ECO:0000269" key="5">
    <source>
    </source>
</evidence>
<evidence type="ECO:0000303" key="6">
    <source>
    </source>
</evidence>
<evidence type="ECO:0000305" key="7"/>
<gene>
    <name evidence="6" type="primary">ascF</name>
</gene>
<comment type="function">
    <text evidence="5">Terpene cyclase; part of the asc-1 gene cluster that mediates the biosynthesis of both ascochlorin and ascofuranone, a strong inhibitor of cyanide-insensitive alternative oxidases and a promising drug candidate against African trypanosomiasis (PubMed:30952781). The first step in the pathway is performed by the non-reducing polyketide synthase ascC that produces orsellinic acid by condensing acetyl-CoA with 3 malonyl-CoA units (PubMed:30952781). Orsellinic acid is then prenylated by the prenyltransferase ascA to yield ilicicolinic acid B (PubMed:30952781). Ilicicolinic acid B is further reduced to ilicicolin B by the reductase ascB (PubMed:30952781). The halogenase ascD then chlorinates ilicicolin B to produce ilicicolin A which is converted to ilicicolin A epoxide by the cytochrome P450 monooxygenase ascE that catalyzes stereoselective epoxidation of the terminal double bond of the prenyl group (PubMed:30952781). Ilicicolin A epoxide is the last common precursor for the biosynthesis of ascofuranone and ascochlorin (PubMed:30952781). The terpene cyclase ascF produces a monocyclic terpene, and the cyclization reaction is proposed to be initiated by protonation of the terminal epoxide of ilicicolin A epoxide to generate a monocyclic tertiarycation, which is followed by a series of hydride and methyl shifts with abstraction of proton, leading to the formation of the (14S,15R,19R)-trimethylcyclohexanone ring structure of ilicicolin C, which is finally reduced to ascochlorin by the dehydrogenase ascG (PubMed:30952781). On the other hand, ilicicolin A epoxide is hydroxylated by the cytochrome P450 monooxygenase ascH, and the resultant product is cyclized by the terpene cyclase ascI to ascofuranol via protonation-initiated epoxide ring opening, which facilitates the 6-endo-tet cyclization to form the tetrahy-drofuran ring (PubMed:30952781). Finally, ascofuranol is oxidized into ascofuranone by ascJ (PubMed:30952781).</text>
</comment>
<comment type="catalytic activity">
    <reaction evidence="5">
        <text>ilicicolin A epoxide = ilicicolin C</text>
        <dbReference type="Rhea" id="RHEA:63096"/>
        <dbReference type="ChEBI" id="CHEBI:146155"/>
        <dbReference type="ChEBI" id="CHEBI:146156"/>
    </reaction>
    <physiologicalReaction direction="left-to-right" evidence="5">
        <dbReference type="Rhea" id="RHEA:63097"/>
    </physiologicalReaction>
</comment>
<comment type="pathway">
    <text evidence="5">Secondary metabolite biosynthesis; terpenoid biosynthesis.</text>
</comment>
<comment type="subcellular location">
    <subcellularLocation>
        <location evidence="1">Membrane</location>
        <topology evidence="1">Multi-pass membrane protein</topology>
    </subcellularLocation>
</comment>
<comment type="induction">
    <text evidence="5">Expression is induced on AF medium.</text>
</comment>
<comment type="disruption phenotype">
    <text evidence="5">Still produces ascofuranone but impairs the production of ascochlorin and leads to the accumulation of ilicicolin A epoxide.</text>
</comment>
<comment type="biotechnology">
    <text evidence="2 3 4">Ascofuranone is a specific inhibitor of trypanosome alternative oxidase (TAO), and quickly kills African trypanosomes in vitro and cures infected mice. As an essential factor for trypanosome survival, TAO is a promising drug target due to the absence of alternative oxidases in the mammalian host.</text>
</comment>
<comment type="similarity">
    <text evidence="7">Belongs to the paxB family.</text>
</comment>
<organism>
    <name type="scientific">Acremonium egyptiacum</name>
    <name type="common">Oospora egyptiaca</name>
    <dbReference type="NCBI Taxonomy" id="749675"/>
    <lineage>
        <taxon>Eukaryota</taxon>
        <taxon>Fungi</taxon>
        <taxon>Dikarya</taxon>
        <taxon>Ascomycota</taxon>
        <taxon>Pezizomycotina</taxon>
        <taxon>Sordariomycetes</taxon>
        <taxon>Hypocreomycetidae</taxon>
        <taxon>Hypocreales</taxon>
        <taxon>Hypocreales incertae sedis</taxon>
        <taxon>Acremonium</taxon>
    </lineage>
</organism>
<keyword id="KW-0413">Isomerase</keyword>
<keyword id="KW-0472">Membrane</keyword>
<keyword id="KW-0812">Transmembrane</keyword>
<keyword id="KW-1133">Transmembrane helix</keyword>
<accession>A0A455RAK9</accession>
<proteinExistence type="evidence at protein level"/>
<name>ASCF_ACREG</name>
<protein>
    <recommendedName>
        <fullName evidence="6">Terpene cyclase ascF</fullName>
        <ecNumber evidence="5">5.4.99.-</ecNumber>
    </recommendedName>
    <alternativeName>
        <fullName evidence="6">Ascofuranone/ascochlorin biosynthesis clusters protein F</fullName>
    </alternativeName>
</protein>